<keyword id="KW-1185">Reference proteome</keyword>
<keyword id="KW-0687">Ribonucleoprotein</keyword>
<keyword id="KW-0689">Ribosomal protein</keyword>
<keyword id="KW-0694">RNA-binding</keyword>
<keyword id="KW-0699">rRNA-binding</keyword>
<keyword id="KW-0820">tRNA-binding</keyword>
<name>RS13_SHEWM</name>
<accession>B1KMW1</accession>
<comment type="function">
    <text evidence="1">Located at the top of the head of the 30S subunit, it contacts several helices of the 16S rRNA. In the 70S ribosome it contacts the 23S rRNA (bridge B1a) and protein L5 of the 50S subunit (bridge B1b), connecting the 2 subunits; these bridges are implicated in subunit movement. Contacts the tRNAs in the A and P-sites.</text>
</comment>
<comment type="subunit">
    <text evidence="1">Part of the 30S ribosomal subunit. Forms a loose heterodimer with protein S19. Forms two bridges to the 50S subunit in the 70S ribosome.</text>
</comment>
<comment type="similarity">
    <text evidence="1">Belongs to the universal ribosomal protein uS13 family.</text>
</comment>
<sequence>MARIAGINIPDHKHTVIALTGIFGIGRTRARAICAATSVAEDAKIKELSEAQIDTLREAVAEYTVEGDLRREVSMNIKRLMDLGCYRGIRHRRSLPLRGQRTKTNARTRKGPRKPIRK</sequence>
<gene>
    <name evidence="1" type="primary">rpsM</name>
    <name type="ordered locus">Swoo_4668</name>
</gene>
<feature type="chain" id="PRO_1000141311" description="Small ribosomal subunit protein uS13">
    <location>
        <begin position="1"/>
        <end position="118"/>
    </location>
</feature>
<feature type="region of interest" description="Disordered" evidence="2">
    <location>
        <begin position="94"/>
        <end position="118"/>
    </location>
</feature>
<protein>
    <recommendedName>
        <fullName evidence="1">Small ribosomal subunit protein uS13</fullName>
    </recommendedName>
    <alternativeName>
        <fullName evidence="3">30S ribosomal protein S13</fullName>
    </alternativeName>
</protein>
<proteinExistence type="inferred from homology"/>
<evidence type="ECO:0000255" key="1">
    <source>
        <dbReference type="HAMAP-Rule" id="MF_01315"/>
    </source>
</evidence>
<evidence type="ECO:0000256" key="2">
    <source>
        <dbReference type="SAM" id="MobiDB-lite"/>
    </source>
</evidence>
<evidence type="ECO:0000305" key="3"/>
<dbReference type="EMBL" id="CP000961">
    <property type="protein sequence ID" value="ACA88918.1"/>
    <property type="molecule type" value="Genomic_DNA"/>
</dbReference>
<dbReference type="RefSeq" id="WP_012327242.1">
    <property type="nucleotide sequence ID" value="NC_010506.1"/>
</dbReference>
<dbReference type="SMR" id="B1KMW1"/>
<dbReference type="STRING" id="392500.Swoo_4668"/>
<dbReference type="KEGG" id="swd:Swoo_4668"/>
<dbReference type="eggNOG" id="COG0099">
    <property type="taxonomic scope" value="Bacteria"/>
</dbReference>
<dbReference type="HOGENOM" id="CLU_103849_1_2_6"/>
<dbReference type="Proteomes" id="UP000002168">
    <property type="component" value="Chromosome"/>
</dbReference>
<dbReference type="GO" id="GO:0005829">
    <property type="term" value="C:cytosol"/>
    <property type="evidence" value="ECO:0007669"/>
    <property type="project" value="TreeGrafter"/>
</dbReference>
<dbReference type="GO" id="GO:0015935">
    <property type="term" value="C:small ribosomal subunit"/>
    <property type="evidence" value="ECO:0007669"/>
    <property type="project" value="TreeGrafter"/>
</dbReference>
<dbReference type="GO" id="GO:0019843">
    <property type="term" value="F:rRNA binding"/>
    <property type="evidence" value="ECO:0007669"/>
    <property type="project" value="UniProtKB-UniRule"/>
</dbReference>
<dbReference type="GO" id="GO:0003735">
    <property type="term" value="F:structural constituent of ribosome"/>
    <property type="evidence" value="ECO:0007669"/>
    <property type="project" value="InterPro"/>
</dbReference>
<dbReference type="GO" id="GO:0000049">
    <property type="term" value="F:tRNA binding"/>
    <property type="evidence" value="ECO:0007669"/>
    <property type="project" value="UniProtKB-UniRule"/>
</dbReference>
<dbReference type="GO" id="GO:0006412">
    <property type="term" value="P:translation"/>
    <property type="evidence" value="ECO:0007669"/>
    <property type="project" value="UniProtKB-UniRule"/>
</dbReference>
<dbReference type="FunFam" id="1.10.8.50:FF:000001">
    <property type="entry name" value="30S ribosomal protein S13"/>
    <property type="match status" value="1"/>
</dbReference>
<dbReference type="FunFam" id="4.10.910.10:FF:000001">
    <property type="entry name" value="30S ribosomal protein S13"/>
    <property type="match status" value="1"/>
</dbReference>
<dbReference type="Gene3D" id="1.10.8.50">
    <property type="match status" value="1"/>
</dbReference>
<dbReference type="Gene3D" id="4.10.910.10">
    <property type="entry name" value="30s ribosomal protein s13, domain 2"/>
    <property type="match status" value="1"/>
</dbReference>
<dbReference type="HAMAP" id="MF_01315">
    <property type="entry name" value="Ribosomal_uS13"/>
    <property type="match status" value="1"/>
</dbReference>
<dbReference type="InterPro" id="IPR027437">
    <property type="entry name" value="Rbsml_uS13_C"/>
</dbReference>
<dbReference type="InterPro" id="IPR001892">
    <property type="entry name" value="Ribosomal_uS13"/>
</dbReference>
<dbReference type="InterPro" id="IPR010979">
    <property type="entry name" value="Ribosomal_uS13-like_H2TH"/>
</dbReference>
<dbReference type="InterPro" id="IPR019980">
    <property type="entry name" value="Ribosomal_uS13_bac-type"/>
</dbReference>
<dbReference type="InterPro" id="IPR018269">
    <property type="entry name" value="Ribosomal_uS13_CS"/>
</dbReference>
<dbReference type="NCBIfam" id="TIGR03631">
    <property type="entry name" value="uS13_bact"/>
    <property type="match status" value="1"/>
</dbReference>
<dbReference type="PANTHER" id="PTHR10871">
    <property type="entry name" value="30S RIBOSOMAL PROTEIN S13/40S RIBOSOMAL PROTEIN S18"/>
    <property type="match status" value="1"/>
</dbReference>
<dbReference type="PANTHER" id="PTHR10871:SF1">
    <property type="entry name" value="SMALL RIBOSOMAL SUBUNIT PROTEIN US13M"/>
    <property type="match status" value="1"/>
</dbReference>
<dbReference type="Pfam" id="PF00416">
    <property type="entry name" value="Ribosomal_S13"/>
    <property type="match status" value="1"/>
</dbReference>
<dbReference type="PIRSF" id="PIRSF002134">
    <property type="entry name" value="Ribosomal_S13"/>
    <property type="match status" value="1"/>
</dbReference>
<dbReference type="SUPFAM" id="SSF46946">
    <property type="entry name" value="S13-like H2TH domain"/>
    <property type="match status" value="1"/>
</dbReference>
<dbReference type="PROSITE" id="PS00646">
    <property type="entry name" value="RIBOSOMAL_S13_1"/>
    <property type="match status" value="1"/>
</dbReference>
<dbReference type="PROSITE" id="PS50159">
    <property type="entry name" value="RIBOSOMAL_S13_2"/>
    <property type="match status" value="1"/>
</dbReference>
<reference key="1">
    <citation type="submission" date="2008-02" db="EMBL/GenBank/DDBJ databases">
        <title>Complete sequence of Shewanella woodyi ATCC 51908.</title>
        <authorList>
            <consortium name="US DOE Joint Genome Institute"/>
            <person name="Copeland A."/>
            <person name="Lucas S."/>
            <person name="Lapidus A."/>
            <person name="Glavina del Rio T."/>
            <person name="Dalin E."/>
            <person name="Tice H."/>
            <person name="Bruce D."/>
            <person name="Goodwin L."/>
            <person name="Pitluck S."/>
            <person name="Sims D."/>
            <person name="Brettin T."/>
            <person name="Detter J.C."/>
            <person name="Han C."/>
            <person name="Kuske C.R."/>
            <person name="Schmutz J."/>
            <person name="Larimer F."/>
            <person name="Land M."/>
            <person name="Hauser L."/>
            <person name="Kyrpides N."/>
            <person name="Lykidis A."/>
            <person name="Zhao J.-S."/>
            <person name="Richardson P."/>
        </authorList>
    </citation>
    <scope>NUCLEOTIDE SEQUENCE [LARGE SCALE GENOMIC DNA]</scope>
    <source>
        <strain>ATCC 51908 / MS32</strain>
    </source>
</reference>
<organism>
    <name type="scientific">Shewanella woodyi (strain ATCC 51908 / MS32)</name>
    <dbReference type="NCBI Taxonomy" id="392500"/>
    <lineage>
        <taxon>Bacteria</taxon>
        <taxon>Pseudomonadati</taxon>
        <taxon>Pseudomonadota</taxon>
        <taxon>Gammaproteobacteria</taxon>
        <taxon>Alteromonadales</taxon>
        <taxon>Shewanellaceae</taxon>
        <taxon>Shewanella</taxon>
    </lineage>
</organism>